<feature type="chain" id="PRO_0000303414" description="tRNA N6-adenosine threonylcarbamoyltransferase">
    <location>
        <begin position="1"/>
        <end position="344"/>
    </location>
</feature>
<feature type="binding site" evidence="1">
    <location>
        <position position="119"/>
    </location>
    <ligand>
        <name>Fe cation</name>
        <dbReference type="ChEBI" id="CHEBI:24875"/>
    </ligand>
</feature>
<feature type="binding site" evidence="1">
    <location>
        <position position="123"/>
    </location>
    <ligand>
        <name>Fe cation</name>
        <dbReference type="ChEBI" id="CHEBI:24875"/>
    </ligand>
</feature>
<feature type="binding site" evidence="1">
    <location>
        <begin position="141"/>
        <end position="145"/>
    </location>
    <ligand>
        <name>substrate</name>
    </ligand>
</feature>
<feature type="binding site" evidence="1">
    <location>
        <position position="174"/>
    </location>
    <ligand>
        <name>substrate</name>
    </ligand>
</feature>
<feature type="binding site" evidence="1">
    <location>
        <position position="187"/>
    </location>
    <ligand>
        <name>substrate</name>
    </ligand>
</feature>
<feature type="binding site" evidence="1">
    <location>
        <position position="191"/>
    </location>
    <ligand>
        <name>substrate</name>
    </ligand>
</feature>
<feature type="binding site" evidence="1">
    <location>
        <position position="280"/>
    </location>
    <ligand>
        <name>substrate</name>
    </ligand>
</feature>
<feature type="binding site" evidence="1">
    <location>
        <position position="310"/>
    </location>
    <ligand>
        <name>Fe cation</name>
        <dbReference type="ChEBI" id="CHEBI:24875"/>
    </ligand>
</feature>
<proteinExistence type="inferred from homology"/>
<name>TSAD_LISMF</name>
<keyword id="KW-0012">Acyltransferase</keyword>
<keyword id="KW-0963">Cytoplasm</keyword>
<keyword id="KW-0408">Iron</keyword>
<keyword id="KW-0479">Metal-binding</keyword>
<keyword id="KW-0808">Transferase</keyword>
<keyword id="KW-0819">tRNA processing</keyword>
<comment type="function">
    <text evidence="1">Required for the formation of a threonylcarbamoyl group on adenosine at position 37 (t(6)A37) in tRNAs that read codons beginning with adenine. Is involved in the transfer of the threonylcarbamoyl moiety of threonylcarbamoyl-AMP (TC-AMP) to the N6 group of A37, together with TsaE and TsaB. TsaD likely plays a direct catalytic role in this reaction.</text>
</comment>
<comment type="catalytic activity">
    <reaction evidence="1">
        <text>L-threonylcarbamoyladenylate + adenosine(37) in tRNA = N(6)-L-threonylcarbamoyladenosine(37) in tRNA + AMP + H(+)</text>
        <dbReference type="Rhea" id="RHEA:37059"/>
        <dbReference type="Rhea" id="RHEA-COMP:10162"/>
        <dbReference type="Rhea" id="RHEA-COMP:10163"/>
        <dbReference type="ChEBI" id="CHEBI:15378"/>
        <dbReference type="ChEBI" id="CHEBI:73682"/>
        <dbReference type="ChEBI" id="CHEBI:74411"/>
        <dbReference type="ChEBI" id="CHEBI:74418"/>
        <dbReference type="ChEBI" id="CHEBI:456215"/>
        <dbReference type="EC" id="2.3.1.234"/>
    </reaction>
</comment>
<comment type="cofactor">
    <cofactor evidence="1">
        <name>Fe(2+)</name>
        <dbReference type="ChEBI" id="CHEBI:29033"/>
    </cofactor>
    <text evidence="1">Binds 1 Fe(2+) ion per subunit.</text>
</comment>
<comment type="subcellular location">
    <subcellularLocation>
        <location evidence="1">Cytoplasm</location>
    </subcellularLocation>
</comment>
<comment type="similarity">
    <text evidence="1">Belongs to the KAE1 / TsaD family.</text>
</comment>
<comment type="sequence caution" evidence="2">
    <conflict type="erroneous initiation">
        <sequence resource="EMBL-CDS" id="AAT04877"/>
    </conflict>
</comment>
<organism>
    <name type="scientific">Listeria monocytogenes serotype 4b (strain F2365)</name>
    <dbReference type="NCBI Taxonomy" id="265669"/>
    <lineage>
        <taxon>Bacteria</taxon>
        <taxon>Bacillati</taxon>
        <taxon>Bacillota</taxon>
        <taxon>Bacilli</taxon>
        <taxon>Bacillales</taxon>
        <taxon>Listeriaceae</taxon>
        <taxon>Listeria</taxon>
    </lineage>
</organism>
<protein>
    <recommendedName>
        <fullName evidence="1">tRNA N6-adenosine threonylcarbamoyltransferase</fullName>
        <ecNumber evidence="1">2.3.1.234</ecNumber>
    </recommendedName>
    <alternativeName>
        <fullName evidence="1">N6-L-threonylcarbamoyladenine synthase</fullName>
        <shortName evidence="1">t(6)A synthase</shortName>
    </alternativeName>
    <alternativeName>
        <fullName evidence="1">t(6)A37 threonylcarbamoyladenosine biosynthesis protein TsaD</fullName>
    </alternativeName>
    <alternativeName>
        <fullName evidence="1">tRNA threonylcarbamoyladenosine biosynthesis protein TsaD</fullName>
    </alternativeName>
</protein>
<gene>
    <name evidence="1" type="primary">tsaD</name>
    <name type="synonym">gcp</name>
    <name type="ordered locus">LMOf2365_2107</name>
</gene>
<accession>Q71XT8</accession>
<reference key="1">
    <citation type="journal article" date="2004" name="Nucleic Acids Res.">
        <title>Whole genome comparisons of serotype 4b and 1/2a strains of the food-borne pathogen Listeria monocytogenes reveal new insights into the core genome components of this species.</title>
        <authorList>
            <person name="Nelson K.E."/>
            <person name="Fouts D.E."/>
            <person name="Mongodin E.F."/>
            <person name="Ravel J."/>
            <person name="DeBoy R.T."/>
            <person name="Kolonay J.F."/>
            <person name="Rasko D.A."/>
            <person name="Angiuoli S.V."/>
            <person name="Gill S.R."/>
            <person name="Paulsen I.T."/>
            <person name="Peterson J.D."/>
            <person name="White O."/>
            <person name="Nelson W.C."/>
            <person name="Nierman W.C."/>
            <person name="Beanan M.J."/>
            <person name="Brinkac L.M."/>
            <person name="Daugherty S.C."/>
            <person name="Dodson R.J."/>
            <person name="Durkin A.S."/>
            <person name="Madupu R."/>
            <person name="Haft D.H."/>
            <person name="Selengut J."/>
            <person name="Van Aken S.E."/>
            <person name="Khouri H.M."/>
            <person name="Fedorova N."/>
            <person name="Forberger H.A."/>
            <person name="Tran B."/>
            <person name="Kathariou S."/>
            <person name="Wonderling L.D."/>
            <person name="Uhlich G.A."/>
            <person name="Bayles D.O."/>
            <person name="Luchansky J.B."/>
            <person name="Fraser C.M."/>
        </authorList>
    </citation>
    <scope>NUCLEOTIDE SEQUENCE [LARGE SCALE GENOMIC DNA]</scope>
    <source>
        <strain>F2365</strain>
    </source>
</reference>
<evidence type="ECO:0000255" key="1">
    <source>
        <dbReference type="HAMAP-Rule" id="MF_01445"/>
    </source>
</evidence>
<evidence type="ECO:0000305" key="2"/>
<sequence length="344" mass="36874">MGGLMKKNTLILGIESSCDETAASVVKNGNEIISSVVASQIESHKRFGGVVPEIASRHHVEQITLVIEEALKQANVTMDDLDGIAVTEGPGLVGALLIGVNAAKTLAFMHNLPLVGVHHIAGHIYANRFETEFKFPLLSLVVSGGHTELVLMKADNEFEIIGETRDDAAGEAYDKVARTLGLAYPGGVQIDKLAKDGEDTFHFPRAMMDEGSFDFSFSGLKSSFINTLHNLRQRGEEPNPNDMAASFQASVVDVLVSKTIRAAKQYDVKQLLLAGGVAANQGLRERLIQEVKLELPETELIIPPLALCGDNAAMIAAAGTVSFLQGKRSGFDMNANPGLLLEDI</sequence>
<dbReference type="EC" id="2.3.1.234" evidence="1"/>
<dbReference type="EMBL" id="AE017262">
    <property type="protein sequence ID" value="AAT04877.1"/>
    <property type="status" value="ALT_INIT"/>
    <property type="molecule type" value="Genomic_DNA"/>
</dbReference>
<dbReference type="SMR" id="Q71XT8"/>
<dbReference type="KEGG" id="lmf:LMOf2365_2107"/>
<dbReference type="HOGENOM" id="CLU_023208_0_2_9"/>
<dbReference type="GO" id="GO:0005737">
    <property type="term" value="C:cytoplasm"/>
    <property type="evidence" value="ECO:0007669"/>
    <property type="project" value="UniProtKB-SubCell"/>
</dbReference>
<dbReference type="GO" id="GO:0005506">
    <property type="term" value="F:iron ion binding"/>
    <property type="evidence" value="ECO:0007669"/>
    <property type="project" value="UniProtKB-UniRule"/>
</dbReference>
<dbReference type="GO" id="GO:0061711">
    <property type="term" value="F:N(6)-L-threonylcarbamoyladenine synthase activity"/>
    <property type="evidence" value="ECO:0007669"/>
    <property type="project" value="UniProtKB-EC"/>
</dbReference>
<dbReference type="GO" id="GO:0002949">
    <property type="term" value="P:tRNA threonylcarbamoyladenosine modification"/>
    <property type="evidence" value="ECO:0007669"/>
    <property type="project" value="UniProtKB-UniRule"/>
</dbReference>
<dbReference type="CDD" id="cd24133">
    <property type="entry name" value="ASKHA_NBD_TsaD_bac"/>
    <property type="match status" value="1"/>
</dbReference>
<dbReference type="FunFam" id="3.30.420.40:FF:000012">
    <property type="entry name" value="tRNA N6-adenosine threonylcarbamoyltransferase"/>
    <property type="match status" value="1"/>
</dbReference>
<dbReference type="FunFam" id="3.30.420.40:FF:000040">
    <property type="entry name" value="tRNA N6-adenosine threonylcarbamoyltransferase"/>
    <property type="match status" value="1"/>
</dbReference>
<dbReference type="Gene3D" id="3.30.420.40">
    <property type="match status" value="2"/>
</dbReference>
<dbReference type="HAMAP" id="MF_01445">
    <property type="entry name" value="TsaD"/>
    <property type="match status" value="1"/>
</dbReference>
<dbReference type="InterPro" id="IPR043129">
    <property type="entry name" value="ATPase_NBD"/>
</dbReference>
<dbReference type="InterPro" id="IPR000905">
    <property type="entry name" value="Gcp-like_dom"/>
</dbReference>
<dbReference type="InterPro" id="IPR017861">
    <property type="entry name" value="KAE1/TsaD"/>
</dbReference>
<dbReference type="InterPro" id="IPR017860">
    <property type="entry name" value="Peptidase_M22_CS"/>
</dbReference>
<dbReference type="InterPro" id="IPR022450">
    <property type="entry name" value="TsaD"/>
</dbReference>
<dbReference type="NCBIfam" id="TIGR00329">
    <property type="entry name" value="gcp_kae1"/>
    <property type="match status" value="1"/>
</dbReference>
<dbReference type="NCBIfam" id="TIGR03723">
    <property type="entry name" value="T6A_TsaD_YgjD"/>
    <property type="match status" value="1"/>
</dbReference>
<dbReference type="PANTHER" id="PTHR11735">
    <property type="entry name" value="TRNA N6-ADENOSINE THREONYLCARBAMOYLTRANSFERASE"/>
    <property type="match status" value="1"/>
</dbReference>
<dbReference type="PANTHER" id="PTHR11735:SF6">
    <property type="entry name" value="TRNA N6-ADENOSINE THREONYLCARBAMOYLTRANSFERASE, MITOCHONDRIAL"/>
    <property type="match status" value="1"/>
</dbReference>
<dbReference type="Pfam" id="PF00814">
    <property type="entry name" value="TsaD"/>
    <property type="match status" value="1"/>
</dbReference>
<dbReference type="PRINTS" id="PR00789">
    <property type="entry name" value="OSIALOPTASE"/>
</dbReference>
<dbReference type="SUPFAM" id="SSF53067">
    <property type="entry name" value="Actin-like ATPase domain"/>
    <property type="match status" value="2"/>
</dbReference>
<dbReference type="PROSITE" id="PS01016">
    <property type="entry name" value="GLYCOPROTEASE"/>
    <property type="match status" value="1"/>
</dbReference>